<dbReference type="SMR" id="P81881"/>
<dbReference type="GO" id="GO:0005615">
    <property type="term" value="C:extracellular space"/>
    <property type="evidence" value="ECO:0007669"/>
    <property type="project" value="TreeGrafter"/>
</dbReference>
<dbReference type="GO" id="GO:0005179">
    <property type="term" value="F:hormone activity"/>
    <property type="evidence" value="ECO:0007669"/>
    <property type="project" value="UniProtKB-KW"/>
</dbReference>
<dbReference type="GO" id="GO:0006006">
    <property type="term" value="P:glucose metabolic process"/>
    <property type="evidence" value="ECO:0007669"/>
    <property type="project" value="UniProtKB-KW"/>
</dbReference>
<dbReference type="CDD" id="cd04367">
    <property type="entry name" value="IlGF_insulin_like"/>
    <property type="match status" value="1"/>
</dbReference>
<dbReference type="Gene3D" id="1.10.100.10">
    <property type="entry name" value="Insulin-like"/>
    <property type="match status" value="1"/>
</dbReference>
<dbReference type="InterPro" id="IPR004825">
    <property type="entry name" value="Insulin"/>
</dbReference>
<dbReference type="InterPro" id="IPR016179">
    <property type="entry name" value="Insulin-like"/>
</dbReference>
<dbReference type="InterPro" id="IPR036438">
    <property type="entry name" value="Insulin-like_sf"/>
</dbReference>
<dbReference type="InterPro" id="IPR022353">
    <property type="entry name" value="Insulin_CS"/>
</dbReference>
<dbReference type="InterPro" id="IPR022352">
    <property type="entry name" value="Insulin_family"/>
</dbReference>
<dbReference type="PANTHER" id="PTHR11454:SF9">
    <property type="entry name" value="INSULIN"/>
    <property type="match status" value="1"/>
</dbReference>
<dbReference type="PANTHER" id="PTHR11454">
    <property type="entry name" value="INSULIN/INSULIN GROWTH FACTOR"/>
    <property type="match status" value="1"/>
</dbReference>
<dbReference type="Pfam" id="PF00049">
    <property type="entry name" value="Insulin"/>
    <property type="match status" value="2"/>
</dbReference>
<dbReference type="PRINTS" id="PR00277">
    <property type="entry name" value="INSULIN"/>
</dbReference>
<dbReference type="PRINTS" id="PR00276">
    <property type="entry name" value="INSULINFAMLY"/>
</dbReference>
<dbReference type="SMART" id="SM00078">
    <property type="entry name" value="IlGF"/>
    <property type="match status" value="1"/>
</dbReference>
<dbReference type="SUPFAM" id="SSF56994">
    <property type="entry name" value="Insulin-like"/>
    <property type="match status" value="1"/>
</dbReference>
<dbReference type="PROSITE" id="PS00262">
    <property type="entry name" value="INSULIN"/>
    <property type="match status" value="1"/>
</dbReference>
<protein>
    <recommendedName>
        <fullName>Insulin</fullName>
    </recommendedName>
    <component>
        <recommendedName>
            <fullName>Insulin B chain</fullName>
        </recommendedName>
    </component>
    <component>
        <recommendedName>
            <fullName>Insulin A chain</fullName>
        </recommendedName>
    </component>
</protein>
<gene>
    <name type="primary">ins</name>
</gene>
<reference key="1">
    <citation type="journal article" date="1999" name="Comp. Biochem. Physiol.">
        <title>Purification and characterization of insulin and peptides derived from proglucagon and prosomatostatin from the fruit-eating fish, the pacu Piaractus mesopotamicus.</title>
        <authorList>
            <person name="de Lima J.A."/>
            <person name="Oliveira B."/>
            <person name="Conlon J.M."/>
        </authorList>
    </citation>
    <scope>PROTEIN SEQUENCE</scope>
    <source>
        <tissue>Pancreas</tissue>
    </source>
</reference>
<keyword id="KW-0119">Carbohydrate metabolism</keyword>
<keyword id="KW-0903">Direct protein sequencing</keyword>
<keyword id="KW-1015">Disulfide bond</keyword>
<keyword id="KW-0313">Glucose metabolism</keyword>
<keyword id="KW-0372">Hormone</keyword>
<keyword id="KW-0964">Secreted</keyword>
<sequence>NAGAPQHLCGSHLVDALYLVCGPSGFFYNPKGIVEQCCHKPCSIFDLQNYCN</sequence>
<accession>P81881</accession>
<comment type="function">
    <text>Insulin decreases blood glucose concentration. It increases cell permeability to monosaccharides, amino acids and fatty acids. It accelerates glycolysis, the pentose phosphate cycle, and glycogen synthesis in liver.</text>
</comment>
<comment type="subunit">
    <text>Heterodimer of a B chain and an A chain linked by two disulfide bonds.</text>
</comment>
<comment type="subcellular location">
    <subcellularLocation>
        <location>Secreted</location>
    </subcellularLocation>
</comment>
<comment type="similarity">
    <text evidence="1">Belongs to the insulin family.</text>
</comment>
<name>INS_PIAME</name>
<proteinExistence type="evidence at protein level"/>
<organism>
    <name type="scientific">Piaractus mesopotamicus</name>
    <name type="common">Small-scaled pacu</name>
    <name type="synonym">Myletes mesopotamicus</name>
    <dbReference type="NCBI Taxonomy" id="42528"/>
    <lineage>
        <taxon>Eukaryota</taxon>
        <taxon>Metazoa</taxon>
        <taxon>Chordata</taxon>
        <taxon>Craniata</taxon>
        <taxon>Vertebrata</taxon>
        <taxon>Euteleostomi</taxon>
        <taxon>Actinopterygii</taxon>
        <taxon>Neopterygii</taxon>
        <taxon>Teleostei</taxon>
        <taxon>Ostariophysi</taxon>
        <taxon>Characiformes</taxon>
        <taxon>Characoidei</taxon>
        <taxon>Piaractus</taxon>
    </lineage>
</organism>
<evidence type="ECO:0000305" key="1"/>
<feature type="peptide" id="PRO_0000015877" description="Insulin B chain">
    <location>
        <begin position="1"/>
        <end position="31"/>
    </location>
</feature>
<feature type="peptide" id="PRO_0000015878" description="Insulin A chain">
    <location>
        <begin position="32"/>
        <end position="52"/>
    </location>
</feature>
<feature type="disulfide bond" description="Interchain (between B and A chains)">
    <location>
        <begin position="9"/>
        <end position="38"/>
    </location>
</feature>
<feature type="disulfide bond" description="Interchain (between B and A chains)">
    <location>
        <begin position="21"/>
        <end position="51"/>
    </location>
</feature>
<feature type="disulfide bond">
    <location>
        <begin position="37"/>
        <end position="42"/>
    </location>
</feature>
<feature type="non-consecutive residues" evidence="1">
    <location>
        <begin position="31"/>
        <end position="32"/>
    </location>
</feature>